<organism>
    <name type="scientific">Escherichia coli O139:H28 (strain E24377A / ETEC)</name>
    <dbReference type="NCBI Taxonomy" id="331111"/>
    <lineage>
        <taxon>Bacteria</taxon>
        <taxon>Pseudomonadati</taxon>
        <taxon>Pseudomonadota</taxon>
        <taxon>Gammaproteobacteria</taxon>
        <taxon>Enterobacterales</taxon>
        <taxon>Enterobacteriaceae</taxon>
        <taxon>Escherichia</taxon>
    </lineage>
</organism>
<accession>A7ZSK5</accession>
<proteinExistence type="inferred from homology"/>
<evidence type="ECO:0000255" key="1">
    <source>
        <dbReference type="HAMAP-Rule" id="MF_00531"/>
    </source>
</evidence>
<evidence type="ECO:0000305" key="2"/>
<sequence length="92" mass="10430">MPRSLKKGPFIDLHLLKKVEKAVESGDKKPLRTWSRRSTIFPNMIGLTIAVHNGRQHVPVFVTDEMVGHKLGEFAPTRTYRGHAADKKAKKK</sequence>
<keyword id="KW-1185">Reference proteome</keyword>
<keyword id="KW-0687">Ribonucleoprotein</keyword>
<keyword id="KW-0689">Ribosomal protein</keyword>
<keyword id="KW-0694">RNA-binding</keyword>
<keyword id="KW-0699">rRNA-binding</keyword>
<protein>
    <recommendedName>
        <fullName evidence="1">Small ribosomal subunit protein uS19</fullName>
    </recommendedName>
    <alternativeName>
        <fullName evidence="2">30S ribosomal protein S19</fullName>
    </alternativeName>
</protein>
<dbReference type="EMBL" id="CP000800">
    <property type="protein sequence ID" value="ABV21142.1"/>
    <property type="molecule type" value="Genomic_DNA"/>
</dbReference>
<dbReference type="RefSeq" id="WP_001138117.1">
    <property type="nucleotide sequence ID" value="NC_009801.1"/>
</dbReference>
<dbReference type="SMR" id="A7ZSK5"/>
<dbReference type="GeneID" id="98390438"/>
<dbReference type="KEGG" id="ecw:EcE24377A_3799"/>
<dbReference type="HOGENOM" id="CLU_144911_0_1_6"/>
<dbReference type="Proteomes" id="UP000001122">
    <property type="component" value="Chromosome"/>
</dbReference>
<dbReference type="GO" id="GO:0005737">
    <property type="term" value="C:cytoplasm"/>
    <property type="evidence" value="ECO:0007669"/>
    <property type="project" value="UniProtKB-ARBA"/>
</dbReference>
<dbReference type="GO" id="GO:0015935">
    <property type="term" value="C:small ribosomal subunit"/>
    <property type="evidence" value="ECO:0007669"/>
    <property type="project" value="InterPro"/>
</dbReference>
<dbReference type="GO" id="GO:0019843">
    <property type="term" value="F:rRNA binding"/>
    <property type="evidence" value="ECO:0007669"/>
    <property type="project" value="UniProtKB-UniRule"/>
</dbReference>
<dbReference type="GO" id="GO:0003735">
    <property type="term" value="F:structural constituent of ribosome"/>
    <property type="evidence" value="ECO:0007669"/>
    <property type="project" value="InterPro"/>
</dbReference>
<dbReference type="GO" id="GO:0000028">
    <property type="term" value="P:ribosomal small subunit assembly"/>
    <property type="evidence" value="ECO:0007669"/>
    <property type="project" value="TreeGrafter"/>
</dbReference>
<dbReference type="GO" id="GO:0006412">
    <property type="term" value="P:translation"/>
    <property type="evidence" value="ECO:0007669"/>
    <property type="project" value="UniProtKB-UniRule"/>
</dbReference>
<dbReference type="FunFam" id="3.30.860.10:FF:000001">
    <property type="entry name" value="30S ribosomal protein S19"/>
    <property type="match status" value="1"/>
</dbReference>
<dbReference type="Gene3D" id="3.30.860.10">
    <property type="entry name" value="30s Ribosomal Protein S19, Chain A"/>
    <property type="match status" value="1"/>
</dbReference>
<dbReference type="HAMAP" id="MF_00531">
    <property type="entry name" value="Ribosomal_uS19"/>
    <property type="match status" value="1"/>
</dbReference>
<dbReference type="InterPro" id="IPR002222">
    <property type="entry name" value="Ribosomal_uS19"/>
</dbReference>
<dbReference type="InterPro" id="IPR005732">
    <property type="entry name" value="Ribosomal_uS19_bac-type"/>
</dbReference>
<dbReference type="InterPro" id="IPR020934">
    <property type="entry name" value="Ribosomal_uS19_CS"/>
</dbReference>
<dbReference type="InterPro" id="IPR023575">
    <property type="entry name" value="Ribosomal_uS19_SF"/>
</dbReference>
<dbReference type="NCBIfam" id="TIGR01050">
    <property type="entry name" value="rpsS_bact"/>
    <property type="match status" value="1"/>
</dbReference>
<dbReference type="PANTHER" id="PTHR11880">
    <property type="entry name" value="RIBOSOMAL PROTEIN S19P FAMILY MEMBER"/>
    <property type="match status" value="1"/>
</dbReference>
<dbReference type="PANTHER" id="PTHR11880:SF8">
    <property type="entry name" value="SMALL RIBOSOMAL SUBUNIT PROTEIN US19M"/>
    <property type="match status" value="1"/>
</dbReference>
<dbReference type="Pfam" id="PF00203">
    <property type="entry name" value="Ribosomal_S19"/>
    <property type="match status" value="1"/>
</dbReference>
<dbReference type="PIRSF" id="PIRSF002144">
    <property type="entry name" value="Ribosomal_S19"/>
    <property type="match status" value="1"/>
</dbReference>
<dbReference type="PRINTS" id="PR00975">
    <property type="entry name" value="RIBOSOMALS19"/>
</dbReference>
<dbReference type="SUPFAM" id="SSF54570">
    <property type="entry name" value="Ribosomal protein S19"/>
    <property type="match status" value="1"/>
</dbReference>
<dbReference type="PROSITE" id="PS00323">
    <property type="entry name" value="RIBOSOMAL_S19"/>
    <property type="match status" value="1"/>
</dbReference>
<gene>
    <name evidence="1" type="primary">rpsS</name>
    <name type="ordered locus">EcE24377A_3799</name>
</gene>
<comment type="function">
    <text evidence="1">Protein S19 forms a complex with S13 that binds strongly to the 16S ribosomal RNA.</text>
</comment>
<comment type="similarity">
    <text evidence="1">Belongs to the universal ribosomal protein uS19 family.</text>
</comment>
<name>RS19_ECO24</name>
<reference key="1">
    <citation type="journal article" date="2008" name="J. Bacteriol.">
        <title>The pangenome structure of Escherichia coli: comparative genomic analysis of E. coli commensal and pathogenic isolates.</title>
        <authorList>
            <person name="Rasko D.A."/>
            <person name="Rosovitz M.J."/>
            <person name="Myers G.S.A."/>
            <person name="Mongodin E.F."/>
            <person name="Fricke W.F."/>
            <person name="Gajer P."/>
            <person name="Crabtree J."/>
            <person name="Sebaihia M."/>
            <person name="Thomson N.R."/>
            <person name="Chaudhuri R."/>
            <person name="Henderson I.R."/>
            <person name="Sperandio V."/>
            <person name="Ravel J."/>
        </authorList>
    </citation>
    <scope>NUCLEOTIDE SEQUENCE [LARGE SCALE GENOMIC DNA]</scope>
    <source>
        <strain>E24377A / ETEC</strain>
    </source>
</reference>
<feature type="chain" id="PRO_1000060991" description="Small ribosomal subunit protein uS19">
    <location>
        <begin position="1"/>
        <end position="92"/>
    </location>
</feature>